<organism>
    <name type="scientific">Influenza A virus (strain A/Swine/Colorado/1/1977 H3N2)</name>
    <dbReference type="NCBI Taxonomy" id="385645"/>
    <lineage>
        <taxon>Viruses</taxon>
        <taxon>Riboviria</taxon>
        <taxon>Orthornavirae</taxon>
        <taxon>Negarnaviricota</taxon>
        <taxon>Polyploviricotina</taxon>
        <taxon>Insthoviricetes</taxon>
        <taxon>Articulavirales</taxon>
        <taxon>Orthomyxoviridae</taxon>
        <taxon>Alphainfluenzavirus</taxon>
        <taxon>Alphainfluenzavirus influenzae</taxon>
        <taxon>Influenza A virus</taxon>
    </lineage>
</organism>
<protein>
    <recommendedName>
        <fullName evidence="1">RNA-directed RNA polymerase catalytic subunit</fullName>
        <ecNumber evidence="1">2.7.7.48</ecNumber>
    </recommendedName>
    <alternativeName>
        <fullName evidence="1">Polymerase basic protein 1</fullName>
        <shortName evidence="1">PB1</shortName>
    </alternativeName>
    <alternativeName>
        <fullName evidence="1">RNA-directed RNA polymerase subunit P1</fullName>
    </alternativeName>
</protein>
<organismHost>
    <name type="scientific">Aves</name>
    <dbReference type="NCBI Taxonomy" id="8782"/>
</organismHost>
<organismHost>
    <name type="scientific">Cetacea</name>
    <name type="common">whales</name>
    <dbReference type="NCBI Taxonomy" id="9721"/>
</organismHost>
<organismHost>
    <name type="scientific">Homo sapiens</name>
    <name type="common">Human</name>
    <dbReference type="NCBI Taxonomy" id="9606"/>
</organismHost>
<organismHost>
    <name type="scientific">Phocidae</name>
    <name type="common">true seals</name>
    <dbReference type="NCBI Taxonomy" id="9709"/>
</organismHost>
<organismHost>
    <name type="scientific">Sus scrofa</name>
    <name type="common">Pig</name>
    <dbReference type="NCBI Taxonomy" id="9823"/>
</organismHost>
<name>RDRP_I77A4</name>
<keyword id="KW-1262">Eukaryotic host gene expression shutoff by virus</keyword>
<keyword id="KW-1191">Eukaryotic host transcription shutoff by virus</keyword>
<keyword id="KW-1035">Host cytoplasm</keyword>
<keyword id="KW-1190">Host gene expression shutoff by virus</keyword>
<keyword id="KW-1048">Host nucleus</keyword>
<keyword id="KW-0945">Host-virus interaction</keyword>
<keyword id="KW-1104">Inhibition of host RNA polymerase II by virus</keyword>
<keyword id="KW-0547">Nucleotide-binding</keyword>
<keyword id="KW-0548">Nucleotidyltransferase</keyword>
<keyword id="KW-0597">Phosphoprotein</keyword>
<keyword id="KW-0696">RNA-directed RNA polymerase</keyword>
<keyword id="KW-0808">Transferase</keyword>
<keyword id="KW-0693">Viral RNA replication</keyword>
<keyword id="KW-1195">Viral transcription</keyword>
<feature type="chain" id="PRO_0000279619" description="RNA-directed RNA polymerase catalytic subunit">
    <location>
        <begin position="1"/>
        <end position="757"/>
    </location>
</feature>
<feature type="domain" description="RdRp catalytic" evidence="1">
    <location>
        <begin position="286"/>
        <end position="483"/>
    </location>
</feature>
<feature type="region of interest" description="Disordered" evidence="2">
    <location>
        <begin position="50"/>
        <end position="81"/>
    </location>
</feature>
<feature type="region of interest" description="Promoter-binding site" evidence="1">
    <location>
        <begin position="249"/>
        <end position="256"/>
    </location>
</feature>
<feature type="short sequence motif" description="Nuclear localization signal" evidence="1">
    <location>
        <begin position="187"/>
        <end position="195"/>
    </location>
</feature>
<feature type="short sequence motif" description="Nuclear localization signal" evidence="1">
    <location>
        <begin position="203"/>
        <end position="216"/>
    </location>
</feature>
<feature type="compositionally biased region" description="Polar residues" evidence="2">
    <location>
        <begin position="55"/>
        <end position="64"/>
    </location>
</feature>
<feature type="sequence conflict" description="In Ref. 2; ABD61559." ref="2">
    <original>E</original>
    <variation>V</variation>
    <location>
        <position position="12"/>
    </location>
</feature>
<feature type="sequence conflict" description="In Ref. 2; ABD61559." ref="2">
    <original>Q</original>
    <variation>T</variation>
    <location>
        <position position="85"/>
    </location>
</feature>
<feature type="sequence conflict" description="In Ref. 2; ABD61559." ref="2">
    <original>R</original>
    <variation>K</variation>
    <location>
        <position position="121"/>
    </location>
</feature>
<feature type="sequence conflict" description="In Ref. 2; ABD61559." ref="2">
    <original>K</original>
    <variation>Q</variation>
    <location>
        <position position="127"/>
    </location>
</feature>
<feature type="sequence conflict" description="In Ref. 2; ABD61559." ref="2">
    <original>H</original>
    <variation>D</variation>
    <location>
        <position position="565"/>
    </location>
</feature>
<feature type="sequence conflict" description="In Ref. 2; ABD61559." ref="2">
    <original>F</original>
    <variation>L</variation>
    <location>
        <position position="590"/>
    </location>
</feature>
<dbReference type="EC" id="2.7.7.48" evidence="1"/>
<dbReference type="EMBL" id="AF251390">
    <property type="protein sequence ID" value="AAG01744.1"/>
    <property type="molecule type" value="Genomic_RNA"/>
</dbReference>
<dbReference type="EMBL" id="CY009306">
    <property type="protein sequence ID" value="ABD61559.1"/>
    <property type="molecule type" value="Genomic_RNA"/>
</dbReference>
<dbReference type="SMR" id="Q9EA41"/>
<dbReference type="Proteomes" id="UP000009193">
    <property type="component" value="Genome"/>
</dbReference>
<dbReference type="GO" id="GO:0030430">
    <property type="term" value="C:host cell cytoplasm"/>
    <property type="evidence" value="ECO:0007669"/>
    <property type="project" value="UniProtKB-SubCell"/>
</dbReference>
<dbReference type="GO" id="GO:0042025">
    <property type="term" value="C:host cell nucleus"/>
    <property type="evidence" value="ECO:0007669"/>
    <property type="project" value="UniProtKB-SubCell"/>
</dbReference>
<dbReference type="GO" id="GO:0000166">
    <property type="term" value="F:nucleotide binding"/>
    <property type="evidence" value="ECO:0007669"/>
    <property type="project" value="UniProtKB-UniRule"/>
</dbReference>
<dbReference type="GO" id="GO:0003723">
    <property type="term" value="F:RNA binding"/>
    <property type="evidence" value="ECO:0007669"/>
    <property type="project" value="InterPro"/>
</dbReference>
<dbReference type="GO" id="GO:0003968">
    <property type="term" value="F:RNA-directed RNA polymerase activity"/>
    <property type="evidence" value="ECO:0007669"/>
    <property type="project" value="UniProtKB-UniRule"/>
</dbReference>
<dbReference type="GO" id="GO:0006351">
    <property type="term" value="P:DNA-templated transcription"/>
    <property type="evidence" value="ECO:0007669"/>
    <property type="project" value="UniProtKB-UniRule"/>
</dbReference>
<dbReference type="GO" id="GO:0039657">
    <property type="term" value="P:symbiont-mediated suppression of host gene expression"/>
    <property type="evidence" value="ECO:0007669"/>
    <property type="project" value="UniProtKB-KW"/>
</dbReference>
<dbReference type="GO" id="GO:0039523">
    <property type="term" value="P:symbiont-mediated suppression of host mRNA transcription via inhibition of RNA polymerase II activity"/>
    <property type="evidence" value="ECO:0007669"/>
    <property type="project" value="UniProtKB-UniRule"/>
</dbReference>
<dbReference type="GO" id="GO:0039694">
    <property type="term" value="P:viral RNA genome replication"/>
    <property type="evidence" value="ECO:0007669"/>
    <property type="project" value="UniProtKB-UniRule"/>
</dbReference>
<dbReference type="GO" id="GO:0019083">
    <property type="term" value="P:viral transcription"/>
    <property type="evidence" value="ECO:0007669"/>
    <property type="project" value="UniProtKB-KW"/>
</dbReference>
<dbReference type="Gene3D" id="6.10.140.720">
    <property type="match status" value="1"/>
</dbReference>
<dbReference type="HAMAP" id="MF_04065">
    <property type="entry name" value="INFV_RDRP"/>
    <property type="match status" value="1"/>
</dbReference>
<dbReference type="InterPro" id="IPR007099">
    <property type="entry name" value="RNA-dir_pol_NSvirus"/>
</dbReference>
<dbReference type="InterPro" id="IPR001407">
    <property type="entry name" value="RNA_pol_PB1_influenza"/>
</dbReference>
<dbReference type="Pfam" id="PF00602">
    <property type="entry name" value="Flu_PB1"/>
    <property type="match status" value="1"/>
</dbReference>
<dbReference type="PIRSF" id="PIRSF000827">
    <property type="entry name" value="RdRPol_OMV"/>
    <property type="match status" value="1"/>
</dbReference>
<dbReference type="PROSITE" id="PS50525">
    <property type="entry name" value="RDRP_SSRNA_NEG_SEG"/>
    <property type="match status" value="1"/>
</dbReference>
<sequence>MDVNPTLLFLKEPAQNAISTTFPYTGDPPYSHGTGTGYTMDTVNRTHQYSEKGKWTTNTETGAPQLNPIDGPLPEDNEPSGYAQQDCVLEAMAFLEESHPGIFENSCLETMEVVQQTRVDRLTQGRKTYDWTLNRNQPAATALANTIEVFRSNGLTANESGRLIDFLKDVMESMDKEEMEITTHFQRKRRVRDNMTKKMVTQRTIGKKKQRVNKRSYLIRALTLNTMTKDAERGKLKRRAIATPGMQIRGFVYFVETLARSICEKLEQSGLPVGGNEKKAKLANVVRKMMTNSQDTELSFTITGDNTKWNENQNPRMFLAMITYITKNQPEWFRNILSIAPIMFSNKMARLGKGYMFESKRMKLRTQIPAEMLASIDLKYFNESTRKKIEKIRPLLIDGTASLSPGMMMGMFNMLSTVLGVSILNLGQKKYTKTTYWWDGLQSSDDFALIVNAPNHEGIQAGVDRFYRTCKLVGINMSKKKSYINRTGTFEFTSFFYRYGFVANFSMELPSFGVSGINESADMSIGVTVIKNNMINNDLGPATAQMALQLFIKDYRYTYRCHRGHTQIQTRRSFELKKLWEQTRSKAGLFVSDGGPNLYNIRNLHIPEVCLKWELMDEDYQGRLCNPLNPFVSHKEIESVNNAVVMPAHGPAKSMEYDAVATTHSWIPKRNRSILNTSQRGILEDEQMYQKCCNLFEKFFPSSSYRRPVGISSMVEAMVSRARIDARIDFESGRIKKEEFSEIMKICSTIEELRRQK</sequence>
<proteinExistence type="inferred from homology"/>
<accession>Q9EA41</accession>
<accession>Q288Y8</accession>
<gene>
    <name evidence="1" type="primary">PB1</name>
</gene>
<evidence type="ECO:0000255" key="1">
    <source>
        <dbReference type="HAMAP-Rule" id="MF_04065"/>
    </source>
</evidence>
<evidence type="ECO:0000256" key="2">
    <source>
        <dbReference type="SAM" id="MobiDB-lite"/>
    </source>
</evidence>
<comment type="function">
    <text evidence="1">RNA-dependent RNA polymerase which is responsible for replication and transcription of virus RNA segments. The transcription of viral mRNAs occurs by a unique mechanism called cap-snatching. 5' methylated caps of cellular mRNAs are cleaved after 10-13 nucleotides by PA. In turn, these short capped RNAs are used as primers by PB1 for transcription of viral mRNAs. During virus replication, PB1 initiates RNA synthesis and copy vRNA into complementary RNA (cRNA) which in turn serves as a template for the production of more vRNAs.</text>
</comment>
<comment type="catalytic activity">
    <reaction evidence="1">
        <text>RNA(n) + a ribonucleoside 5'-triphosphate = RNA(n+1) + diphosphate</text>
        <dbReference type="Rhea" id="RHEA:21248"/>
        <dbReference type="Rhea" id="RHEA-COMP:14527"/>
        <dbReference type="Rhea" id="RHEA-COMP:17342"/>
        <dbReference type="ChEBI" id="CHEBI:33019"/>
        <dbReference type="ChEBI" id="CHEBI:61557"/>
        <dbReference type="ChEBI" id="CHEBI:140395"/>
        <dbReference type="EC" id="2.7.7.48"/>
    </reaction>
</comment>
<comment type="subunit">
    <text evidence="1">Influenza RNA polymerase is composed of three subunits: PB1, PB2 and PA. Interacts (via N-terminus) with PA (via C-terminus). Interacts (via C-terminus) with PB2 (via N-terminus); this interaction is essential for transcription initiation.</text>
</comment>
<comment type="subcellular location">
    <subcellularLocation>
        <location evidence="1">Host nucleus</location>
    </subcellularLocation>
    <subcellularLocation>
        <location evidence="1">Host cytoplasm</location>
    </subcellularLocation>
</comment>
<comment type="PTM">
    <text evidence="1">Phosphorylated by host PRKCA.</text>
</comment>
<comment type="similarity">
    <text evidence="1">Belongs to the influenza viruses polymerase PB1 family.</text>
</comment>
<reference key="1">
    <citation type="journal article" date="2000" name="Virus Res.">
        <title>Genetic characterization of H3N2 influenza viruses isolated from pigs in North America, 1977-1999: evidence for wholly human and reassortant virus genotypes.</title>
        <authorList>
            <person name="Karasin A.I."/>
            <person name="Schutten M.M."/>
            <person name="Cooper L.A."/>
            <person name="Smith C.B."/>
            <person name="Subbarao K."/>
            <person name="Anderson G.A."/>
            <person name="Carman S."/>
            <person name="Olsen C.W."/>
        </authorList>
    </citation>
    <scope>NUCLEOTIDE SEQUENCE [GENOMIC RNA]</scope>
</reference>
<reference key="2">
    <citation type="submission" date="2006-03" db="EMBL/GenBank/DDBJ databases">
        <title>The NIAID influenza genome sequencing project.</title>
        <authorList>
            <person name="Ghedin E."/>
            <person name="Spiro D."/>
            <person name="Miller N."/>
            <person name="Zaborsky J."/>
            <person name="Feldblyum T."/>
            <person name="Subbu V."/>
            <person name="Shumway M."/>
            <person name="Sparenborg J."/>
            <person name="Groveman L."/>
            <person name="Halpin R."/>
            <person name="Sitz J."/>
            <person name="Koo H."/>
            <person name="Salzberg S.L."/>
            <person name="Webster R.G."/>
            <person name="Hoffmann E."/>
            <person name="Krauss S."/>
            <person name="Naeve C."/>
            <person name="Bao Y."/>
            <person name="Bolotov P."/>
            <person name="Dernovoy D."/>
            <person name="Kiryutin B."/>
            <person name="Lipman D.J."/>
            <person name="Tatusova T."/>
        </authorList>
    </citation>
    <scope>NUCLEOTIDE SEQUENCE [GENOMIC RNA]</scope>
</reference>